<reference key="1">
    <citation type="submission" date="2007-08" db="EMBL/GenBank/DDBJ databases">
        <authorList>
            <consortium name="The Vibrio harveyi Genome Sequencing Project"/>
            <person name="Bassler B."/>
            <person name="Clifton S.W."/>
            <person name="Fulton L."/>
            <person name="Delehaunty K."/>
            <person name="Fronick C."/>
            <person name="Harrison M."/>
            <person name="Markivic C."/>
            <person name="Fulton R."/>
            <person name="Tin-Wollam A.-M."/>
            <person name="Shah N."/>
            <person name="Pepin K."/>
            <person name="Nash W."/>
            <person name="Thiruvilangam P."/>
            <person name="Bhonagiri V."/>
            <person name="Waters C."/>
            <person name="Tu K.C."/>
            <person name="Irgon J."/>
            <person name="Wilson R.K."/>
        </authorList>
    </citation>
    <scope>NUCLEOTIDE SEQUENCE [LARGE SCALE GENOMIC DNA]</scope>
    <source>
        <strain>ATCC BAA-1116 / BB120</strain>
    </source>
</reference>
<comment type="function">
    <text evidence="1">May act as a double-stranded DNA (dsDNA) mimic. Probably regulates the activity of a dsDNA-binding protein.</text>
</comment>
<comment type="similarity">
    <text evidence="1">Belongs to the putative dsDNA mimic protein family.</text>
</comment>
<protein>
    <recommendedName>
        <fullName evidence="1">Putative double-stranded DNA mimic protein VIBHAR_02752</fullName>
    </recommendedName>
</protein>
<sequence>MSDLISYDDVIDAAYDIFLEMAPDNLEPADVILFTAQFEDRGAAELVETGDDWVEHVGFDIDKEVYAEVRIGLVNEENDVLDDVFARMLISRDPEHKFCHMLWKRD</sequence>
<proteinExistence type="inferred from homology"/>
<accession>A7MRY9</accession>
<dbReference type="EMBL" id="CP000789">
    <property type="protein sequence ID" value="ABU71706.1"/>
    <property type="molecule type" value="Genomic_DNA"/>
</dbReference>
<dbReference type="RefSeq" id="WP_005431208.1">
    <property type="nucleotide sequence ID" value="NC_022269.1"/>
</dbReference>
<dbReference type="SMR" id="A7MRY9"/>
<dbReference type="KEGG" id="vha:VIBHAR_02752"/>
<dbReference type="PATRIC" id="fig|338187.25.peg.3424"/>
<dbReference type="Proteomes" id="UP000008152">
    <property type="component" value="Chromosome I"/>
</dbReference>
<dbReference type="Gene3D" id="3.10.450.140">
    <property type="entry name" value="dsDNA mimic, putative"/>
    <property type="match status" value="1"/>
</dbReference>
<dbReference type="HAMAP" id="MF_00680">
    <property type="entry name" value="Put_dsDNA_mimic"/>
    <property type="match status" value="1"/>
</dbReference>
<dbReference type="InterPro" id="IPR007376">
    <property type="entry name" value="dsDNA_mimic_put"/>
</dbReference>
<dbReference type="InterPro" id="IPR036763">
    <property type="entry name" value="Put_dsDNA_mimic_sf"/>
</dbReference>
<dbReference type="NCBIfam" id="NF003469">
    <property type="entry name" value="PRK05094.1"/>
    <property type="match status" value="1"/>
</dbReference>
<dbReference type="Pfam" id="PF04269">
    <property type="entry name" value="DUF440"/>
    <property type="match status" value="1"/>
</dbReference>
<dbReference type="PIRSF" id="PIRSF004916">
    <property type="entry name" value="UCP004916"/>
    <property type="match status" value="1"/>
</dbReference>
<dbReference type="SUPFAM" id="SSF102816">
    <property type="entry name" value="Putative dsDNA mimic"/>
    <property type="match status" value="1"/>
</dbReference>
<evidence type="ECO:0000255" key="1">
    <source>
        <dbReference type="HAMAP-Rule" id="MF_00680"/>
    </source>
</evidence>
<organism>
    <name type="scientific">Vibrio campbellii (strain ATCC BAA-1116)</name>
    <dbReference type="NCBI Taxonomy" id="2902295"/>
    <lineage>
        <taxon>Bacteria</taxon>
        <taxon>Pseudomonadati</taxon>
        <taxon>Pseudomonadota</taxon>
        <taxon>Gammaproteobacteria</taxon>
        <taxon>Vibrionales</taxon>
        <taxon>Vibrionaceae</taxon>
        <taxon>Vibrio</taxon>
    </lineage>
</organism>
<gene>
    <name type="ordered locus">VIBHAR_02752</name>
</gene>
<feature type="chain" id="PRO_1000044915" description="Putative double-stranded DNA mimic protein VIBHAR_02752">
    <location>
        <begin position="1"/>
        <end position="106"/>
    </location>
</feature>
<name>Y2752_VIBC1</name>